<organism>
    <name type="scientific">Nostoc sp. (strain PCC 7120 / SAG 25.82 / UTEX 2576)</name>
    <dbReference type="NCBI Taxonomy" id="103690"/>
    <lineage>
        <taxon>Bacteria</taxon>
        <taxon>Bacillati</taxon>
        <taxon>Cyanobacteriota</taxon>
        <taxon>Cyanophyceae</taxon>
        <taxon>Nostocales</taxon>
        <taxon>Nostocaceae</taxon>
        <taxon>Nostoc</taxon>
    </lineage>
</organism>
<protein>
    <recommendedName>
        <fullName evidence="1">Arginine biosynthesis bifunctional protein ArgJ 2</fullName>
    </recommendedName>
    <domain>
        <recommendedName>
            <fullName evidence="1">Glutamate N-acetyltransferase 2</fullName>
            <ecNumber evidence="1">2.3.1.35</ecNumber>
        </recommendedName>
        <alternativeName>
            <fullName evidence="1">Ornithine acetyltransferase 2</fullName>
            <shortName evidence="1">OATase 2</shortName>
        </alternativeName>
        <alternativeName>
            <fullName evidence="1">Ornithine transacetylase 2</fullName>
        </alternativeName>
    </domain>
    <domain>
        <recommendedName>
            <fullName evidence="1">Amino-acid acetyltransferase 2</fullName>
            <ecNumber evidence="1">2.3.1.1</ecNumber>
        </recommendedName>
        <alternativeName>
            <fullName evidence="1">N-acetylglutamate synthase 2</fullName>
            <shortName evidence="1">AGSase 2</shortName>
        </alternativeName>
    </domain>
    <component>
        <recommendedName>
            <fullName evidence="1">Arginine biosynthesis bifunctional protein ArgJ alpha chain 2</fullName>
        </recommendedName>
    </component>
    <component>
        <recommendedName>
            <fullName evidence="1">Arginine biosynthesis bifunctional protein ArgJ beta chain 2</fullName>
        </recommendedName>
    </component>
</protein>
<gene>
    <name evidence="1" type="primary">argJ2</name>
    <name type="ordered locus">alr4235</name>
</gene>
<accession>Q8YPF9</accession>
<sequence length="387" mass="41146">MSLTASSTPQGFSTFITNLGIRDTTEDFVFLRSDVPCVADGVFTQSLFAGPSVTISRQNLQDGQAQGIIIISKNANVANGAVGIADAQEIIQLVAQETGIAAENLAIASTGVIGRRYPIEKIRAGLVGMGQKLTAADFDLAARGIMTTDTVSKIAARQVGNAKLVGIAKGVGMIEPNMATMLAFFFTDAAISANTLRQIFRSTIDKTFNCLSIDTDTSTSDSAVILANGLAGEVPEAEFASALQEIAHDLVLKIARDGEGATKVIEVTVDSAANYAQAKRVAKAIVNSPLVKTAVYGADPNWGRVAMAIGKCEDERDINPDQVVIRFDEVQVYPNTFQAENLEKLKEIMSKEKVNIHVSLNIGTDVATVWGCDLTEGYVEINGKYST</sequence>
<proteinExistence type="inferred from homology"/>
<keyword id="KW-0012">Acyltransferase</keyword>
<keyword id="KW-0028">Amino-acid biosynthesis</keyword>
<keyword id="KW-0055">Arginine biosynthesis</keyword>
<keyword id="KW-0068">Autocatalytic cleavage</keyword>
<keyword id="KW-0963">Cytoplasm</keyword>
<keyword id="KW-0511">Multifunctional enzyme</keyword>
<keyword id="KW-1185">Reference proteome</keyword>
<keyword id="KW-0808">Transferase</keyword>
<dbReference type="EC" id="2.3.1.35" evidence="1"/>
<dbReference type="EC" id="2.3.1.1" evidence="1"/>
<dbReference type="EMBL" id="BA000019">
    <property type="protein sequence ID" value="BAB75934.1"/>
    <property type="molecule type" value="Genomic_DNA"/>
</dbReference>
<dbReference type="PIR" id="AD2335">
    <property type="entry name" value="AD2335"/>
</dbReference>
<dbReference type="SMR" id="Q8YPF9"/>
<dbReference type="STRING" id="103690.gene:10496284"/>
<dbReference type="KEGG" id="ana:alr4235"/>
<dbReference type="eggNOG" id="COG1364">
    <property type="taxonomic scope" value="Bacteria"/>
</dbReference>
<dbReference type="OrthoDB" id="9804242at2"/>
<dbReference type="UniPathway" id="UPA00068">
    <property type="reaction ID" value="UER00106"/>
</dbReference>
<dbReference type="UniPathway" id="UPA00068">
    <property type="reaction ID" value="UER00111"/>
</dbReference>
<dbReference type="Proteomes" id="UP000002483">
    <property type="component" value="Chromosome"/>
</dbReference>
<dbReference type="GO" id="GO:0005737">
    <property type="term" value="C:cytoplasm"/>
    <property type="evidence" value="ECO:0007669"/>
    <property type="project" value="UniProtKB-SubCell"/>
</dbReference>
<dbReference type="GO" id="GO:0004358">
    <property type="term" value="F:glutamate N-acetyltransferase activity"/>
    <property type="evidence" value="ECO:0007669"/>
    <property type="project" value="UniProtKB-UniRule"/>
</dbReference>
<dbReference type="GO" id="GO:0004042">
    <property type="term" value="F:L-glutamate N-acetyltransferase activity"/>
    <property type="evidence" value="ECO:0007669"/>
    <property type="project" value="UniProtKB-UniRule"/>
</dbReference>
<dbReference type="GO" id="GO:0006526">
    <property type="term" value="P:L-arginine biosynthetic process"/>
    <property type="evidence" value="ECO:0007669"/>
    <property type="project" value="UniProtKB-UniRule"/>
</dbReference>
<dbReference type="GO" id="GO:0006592">
    <property type="term" value="P:ornithine biosynthetic process"/>
    <property type="evidence" value="ECO:0007669"/>
    <property type="project" value="TreeGrafter"/>
</dbReference>
<dbReference type="CDD" id="cd02152">
    <property type="entry name" value="OAT"/>
    <property type="match status" value="1"/>
</dbReference>
<dbReference type="FunFam" id="3.10.20.340:FF:000003">
    <property type="entry name" value="Arginine biosynthesis bifunctional protein ArgJ"/>
    <property type="match status" value="1"/>
</dbReference>
<dbReference type="Gene3D" id="3.10.20.340">
    <property type="entry name" value="ArgJ beta chain, C-terminal domain"/>
    <property type="match status" value="1"/>
</dbReference>
<dbReference type="Gene3D" id="3.60.70.12">
    <property type="entry name" value="L-amino peptidase D-ALA esterase/amidase"/>
    <property type="match status" value="1"/>
</dbReference>
<dbReference type="HAMAP" id="MF_01106">
    <property type="entry name" value="ArgJ"/>
    <property type="match status" value="1"/>
</dbReference>
<dbReference type="InterPro" id="IPR002813">
    <property type="entry name" value="Arg_biosynth_ArgJ"/>
</dbReference>
<dbReference type="InterPro" id="IPR016117">
    <property type="entry name" value="ArgJ-like_dom_sf"/>
</dbReference>
<dbReference type="InterPro" id="IPR042195">
    <property type="entry name" value="ArgJ_beta_C"/>
</dbReference>
<dbReference type="NCBIfam" id="TIGR00120">
    <property type="entry name" value="ArgJ"/>
    <property type="match status" value="1"/>
</dbReference>
<dbReference type="NCBIfam" id="NF003802">
    <property type="entry name" value="PRK05388.1"/>
    <property type="match status" value="1"/>
</dbReference>
<dbReference type="PANTHER" id="PTHR23100">
    <property type="entry name" value="ARGININE BIOSYNTHESIS BIFUNCTIONAL PROTEIN ARGJ"/>
    <property type="match status" value="1"/>
</dbReference>
<dbReference type="PANTHER" id="PTHR23100:SF0">
    <property type="entry name" value="ARGININE BIOSYNTHESIS BIFUNCTIONAL PROTEIN ARGJ, MITOCHONDRIAL"/>
    <property type="match status" value="1"/>
</dbReference>
<dbReference type="Pfam" id="PF01960">
    <property type="entry name" value="ArgJ"/>
    <property type="match status" value="1"/>
</dbReference>
<dbReference type="SUPFAM" id="SSF56266">
    <property type="entry name" value="DmpA/ArgJ-like"/>
    <property type="match status" value="1"/>
</dbReference>
<name>ARGJ2_NOSS1</name>
<reference key="1">
    <citation type="journal article" date="2001" name="DNA Res.">
        <title>Complete genomic sequence of the filamentous nitrogen-fixing cyanobacterium Anabaena sp. strain PCC 7120.</title>
        <authorList>
            <person name="Kaneko T."/>
            <person name="Nakamura Y."/>
            <person name="Wolk C.P."/>
            <person name="Kuritz T."/>
            <person name="Sasamoto S."/>
            <person name="Watanabe A."/>
            <person name="Iriguchi M."/>
            <person name="Ishikawa A."/>
            <person name="Kawashima K."/>
            <person name="Kimura T."/>
            <person name="Kishida Y."/>
            <person name="Kohara M."/>
            <person name="Matsumoto M."/>
            <person name="Matsuno A."/>
            <person name="Muraki A."/>
            <person name="Nakazaki N."/>
            <person name="Shimpo S."/>
            <person name="Sugimoto M."/>
            <person name="Takazawa M."/>
            <person name="Yamada M."/>
            <person name="Yasuda M."/>
            <person name="Tabata S."/>
        </authorList>
    </citation>
    <scope>NUCLEOTIDE SEQUENCE [LARGE SCALE GENOMIC DNA]</scope>
    <source>
        <strain>PCC 7120 / SAG 25.82 / UTEX 2576</strain>
    </source>
</reference>
<feature type="chain" id="PRO_0000002099" description="Arginine biosynthesis bifunctional protein ArgJ alpha chain 2" evidence="1">
    <location>
        <begin position="1"/>
        <end position="179"/>
    </location>
</feature>
<feature type="chain" id="PRO_0000002100" description="Arginine biosynthesis bifunctional protein ArgJ beta chain 2" evidence="1">
    <location>
        <begin position="180"/>
        <end position="387"/>
    </location>
</feature>
<feature type="active site" description="Nucleophile" evidence="1">
    <location>
        <position position="180"/>
    </location>
</feature>
<feature type="binding site" evidence="1">
    <location>
        <position position="147"/>
    </location>
    <ligand>
        <name>substrate</name>
    </ligand>
</feature>
<feature type="binding site" evidence="1">
    <location>
        <position position="169"/>
    </location>
    <ligand>
        <name>substrate</name>
    </ligand>
</feature>
<feature type="binding site" evidence="1">
    <location>
        <position position="180"/>
    </location>
    <ligand>
        <name>substrate</name>
    </ligand>
</feature>
<feature type="binding site" evidence="1">
    <location>
        <position position="259"/>
    </location>
    <ligand>
        <name>substrate</name>
    </ligand>
</feature>
<feature type="binding site" evidence="1">
    <location>
        <position position="382"/>
    </location>
    <ligand>
        <name>substrate</name>
    </ligand>
</feature>
<feature type="binding site" evidence="1">
    <location>
        <position position="387"/>
    </location>
    <ligand>
        <name>substrate</name>
    </ligand>
</feature>
<feature type="site" description="Involved in the stabilization of negative charge on the oxyanion by the formation of the oxyanion hole" evidence="1">
    <location>
        <position position="110"/>
    </location>
</feature>
<feature type="site" description="Involved in the stabilization of negative charge on the oxyanion by the formation of the oxyanion hole" evidence="1">
    <location>
        <position position="111"/>
    </location>
</feature>
<feature type="site" description="Cleavage; by autolysis" evidence="1">
    <location>
        <begin position="179"/>
        <end position="180"/>
    </location>
</feature>
<evidence type="ECO:0000255" key="1">
    <source>
        <dbReference type="HAMAP-Rule" id="MF_01106"/>
    </source>
</evidence>
<comment type="function">
    <text evidence="1">Catalyzes two activities which are involved in the cyclic version of arginine biosynthesis: the synthesis of N-acetylglutamate from glutamate and acetyl-CoA as the acetyl donor, and of ornithine by transacetylation between N(2)-acetylornithine and glutamate.</text>
</comment>
<comment type="catalytic activity">
    <reaction evidence="1">
        <text>N(2)-acetyl-L-ornithine + L-glutamate = N-acetyl-L-glutamate + L-ornithine</text>
        <dbReference type="Rhea" id="RHEA:15349"/>
        <dbReference type="ChEBI" id="CHEBI:29985"/>
        <dbReference type="ChEBI" id="CHEBI:44337"/>
        <dbReference type="ChEBI" id="CHEBI:46911"/>
        <dbReference type="ChEBI" id="CHEBI:57805"/>
        <dbReference type="EC" id="2.3.1.35"/>
    </reaction>
</comment>
<comment type="catalytic activity">
    <reaction evidence="1">
        <text>L-glutamate + acetyl-CoA = N-acetyl-L-glutamate + CoA + H(+)</text>
        <dbReference type="Rhea" id="RHEA:24292"/>
        <dbReference type="ChEBI" id="CHEBI:15378"/>
        <dbReference type="ChEBI" id="CHEBI:29985"/>
        <dbReference type="ChEBI" id="CHEBI:44337"/>
        <dbReference type="ChEBI" id="CHEBI:57287"/>
        <dbReference type="ChEBI" id="CHEBI:57288"/>
        <dbReference type="EC" id="2.3.1.1"/>
    </reaction>
</comment>
<comment type="pathway">
    <text evidence="1">Amino-acid biosynthesis; L-arginine biosynthesis; L-ornithine and N-acetyl-L-glutamate from L-glutamate and N(2)-acetyl-L-ornithine (cyclic): step 1/1.</text>
</comment>
<comment type="pathway">
    <text evidence="1">Amino-acid biosynthesis; L-arginine biosynthesis; N(2)-acetyl-L-ornithine from L-glutamate: step 1/4.</text>
</comment>
<comment type="subunit">
    <text evidence="1">Heterotetramer of two alpha and two beta chains.</text>
</comment>
<comment type="subcellular location">
    <subcellularLocation>
        <location evidence="1">Cytoplasm</location>
    </subcellularLocation>
</comment>
<comment type="similarity">
    <text evidence="1">Belongs to the ArgJ family.</text>
</comment>